<evidence type="ECO:0000255" key="1">
    <source>
        <dbReference type="HAMAP-Rule" id="MF_00006"/>
    </source>
</evidence>
<evidence type="ECO:0000269" key="2">
    <source>
    </source>
</evidence>
<evidence type="ECO:0000303" key="3">
    <source>
    </source>
</evidence>
<name>ARLY_NOSS1</name>
<organism>
    <name type="scientific">Nostoc sp. (strain PCC 7120 / SAG 25.82 / UTEX 2576)</name>
    <dbReference type="NCBI Taxonomy" id="103690"/>
    <lineage>
        <taxon>Bacteria</taxon>
        <taxon>Bacillati</taxon>
        <taxon>Cyanobacteriota</taxon>
        <taxon>Cyanophyceae</taxon>
        <taxon>Nostocales</taxon>
        <taxon>Nostocaceae</taxon>
        <taxon>Nostoc</taxon>
    </lineage>
</organism>
<feature type="chain" id="PRO_0000137732" description="Argininosuccinate lyase">
    <location>
        <begin position="1"/>
        <end position="461"/>
    </location>
</feature>
<dbReference type="EC" id="4.3.2.1" evidence="1 2"/>
<dbReference type="EMBL" id="BA000019">
    <property type="protein sequence ID" value="BAB75586.1"/>
    <property type="molecule type" value="Genomic_DNA"/>
</dbReference>
<dbReference type="PIR" id="AH2291">
    <property type="entry name" value="AH2291"/>
</dbReference>
<dbReference type="RefSeq" id="WP_010998028.1">
    <property type="nucleotide sequence ID" value="NZ_RSCN01000011.1"/>
</dbReference>
<dbReference type="SMR" id="Q8YQE6"/>
<dbReference type="STRING" id="103690.gene:10495929"/>
<dbReference type="KEGG" id="ana:alr3887"/>
<dbReference type="eggNOG" id="COG0165">
    <property type="taxonomic scope" value="Bacteria"/>
</dbReference>
<dbReference type="OrthoDB" id="9769623at2"/>
<dbReference type="UniPathway" id="UPA00068">
    <property type="reaction ID" value="UER00114"/>
</dbReference>
<dbReference type="Proteomes" id="UP000002483">
    <property type="component" value="Chromosome"/>
</dbReference>
<dbReference type="GO" id="GO:0005829">
    <property type="term" value="C:cytosol"/>
    <property type="evidence" value="ECO:0007669"/>
    <property type="project" value="TreeGrafter"/>
</dbReference>
<dbReference type="GO" id="GO:0004056">
    <property type="term" value="F:argininosuccinate lyase activity"/>
    <property type="evidence" value="ECO:0007669"/>
    <property type="project" value="UniProtKB-UniRule"/>
</dbReference>
<dbReference type="GO" id="GO:0042450">
    <property type="term" value="P:arginine biosynthetic process via ornithine"/>
    <property type="evidence" value="ECO:0007669"/>
    <property type="project" value="InterPro"/>
</dbReference>
<dbReference type="GO" id="GO:0006526">
    <property type="term" value="P:L-arginine biosynthetic process"/>
    <property type="evidence" value="ECO:0007669"/>
    <property type="project" value="UniProtKB-UniRule"/>
</dbReference>
<dbReference type="CDD" id="cd01359">
    <property type="entry name" value="Argininosuccinate_lyase"/>
    <property type="match status" value="1"/>
</dbReference>
<dbReference type="FunFam" id="1.10.275.10:FF:000002">
    <property type="entry name" value="Argininosuccinate lyase"/>
    <property type="match status" value="1"/>
</dbReference>
<dbReference type="FunFam" id="1.10.40.30:FF:000001">
    <property type="entry name" value="Argininosuccinate lyase"/>
    <property type="match status" value="1"/>
</dbReference>
<dbReference type="FunFam" id="1.20.200.10:FF:000015">
    <property type="entry name" value="argininosuccinate lyase isoform X2"/>
    <property type="match status" value="1"/>
</dbReference>
<dbReference type="Gene3D" id="1.10.40.30">
    <property type="entry name" value="Fumarase/aspartase (C-terminal domain)"/>
    <property type="match status" value="1"/>
</dbReference>
<dbReference type="Gene3D" id="1.20.200.10">
    <property type="entry name" value="Fumarase/aspartase (Central domain)"/>
    <property type="match status" value="1"/>
</dbReference>
<dbReference type="Gene3D" id="1.10.275.10">
    <property type="entry name" value="Fumarase/aspartase (N-terminal domain)"/>
    <property type="match status" value="1"/>
</dbReference>
<dbReference type="HAMAP" id="MF_00006">
    <property type="entry name" value="Arg_succ_lyase"/>
    <property type="match status" value="1"/>
</dbReference>
<dbReference type="InterPro" id="IPR029419">
    <property type="entry name" value="Arg_succ_lyase_C"/>
</dbReference>
<dbReference type="InterPro" id="IPR009049">
    <property type="entry name" value="Argininosuccinate_lyase"/>
</dbReference>
<dbReference type="InterPro" id="IPR024083">
    <property type="entry name" value="Fumarase/histidase_N"/>
</dbReference>
<dbReference type="InterPro" id="IPR020557">
    <property type="entry name" value="Fumarate_lyase_CS"/>
</dbReference>
<dbReference type="InterPro" id="IPR000362">
    <property type="entry name" value="Fumarate_lyase_fam"/>
</dbReference>
<dbReference type="InterPro" id="IPR022761">
    <property type="entry name" value="Fumarate_lyase_N"/>
</dbReference>
<dbReference type="InterPro" id="IPR008948">
    <property type="entry name" value="L-Aspartase-like"/>
</dbReference>
<dbReference type="NCBIfam" id="TIGR00838">
    <property type="entry name" value="argH"/>
    <property type="match status" value="1"/>
</dbReference>
<dbReference type="PANTHER" id="PTHR43814">
    <property type="entry name" value="ARGININOSUCCINATE LYASE"/>
    <property type="match status" value="1"/>
</dbReference>
<dbReference type="PANTHER" id="PTHR43814:SF1">
    <property type="entry name" value="ARGININOSUCCINATE LYASE"/>
    <property type="match status" value="1"/>
</dbReference>
<dbReference type="Pfam" id="PF14698">
    <property type="entry name" value="ASL_C2"/>
    <property type="match status" value="1"/>
</dbReference>
<dbReference type="Pfam" id="PF00206">
    <property type="entry name" value="Lyase_1"/>
    <property type="match status" value="1"/>
</dbReference>
<dbReference type="PRINTS" id="PR00145">
    <property type="entry name" value="ARGSUCLYASE"/>
</dbReference>
<dbReference type="PRINTS" id="PR00149">
    <property type="entry name" value="FUMRATELYASE"/>
</dbReference>
<dbReference type="SUPFAM" id="SSF48557">
    <property type="entry name" value="L-aspartase-like"/>
    <property type="match status" value="1"/>
</dbReference>
<dbReference type="PROSITE" id="PS00163">
    <property type="entry name" value="FUMARATE_LYASES"/>
    <property type="match status" value="1"/>
</dbReference>
<reference key="1">
    <citation type="journal article" date="2001" name="DNA Res.">
        <title>Complete genomic sequence of the filamentous nitrogen-fixing cyanobacterium Anabaena sp. strain PCC 7120.</title>
        <authorList>
            <person name="Kaneko T."/>
            <person name="Nakamura Y."/>
            <person name="Wolk C.P."/>
            <person name="Kuritz T."/>
            <person name="Sasamoto S."/>
            <person name="Watanabe A."/>
            <person name="Iriguchi M."/>
            <person name="Ishikawa A."/>
            <person name="Kawashima K."/>
            <person name="Kimura T."/>
            <person name="Kishida Y."/>
            <person name="Kohara M."/>
            <person name="Matsumoto M."/>
            <person name="Matsuno A."/>
            <person name="Muraki A."/>
            <person name="Nakazaki N."/>
            <person name="Shimpo S."/>
            <person name="Sugimoto M."/>
            <person name="Takazawa M."/>
            <person name="Yamada M."/>
            <person name="Yasuda M."/>
            <person name="Tabata S."/>
        </authorList>
    </citation>
    <scope>NUCLEOTIDE SEQUENCE [LARGE SCALE GENOMIC DNA]</scope>
    <source>
        <strain>PCC 7120 / SAG 25.82 / UTEX 2576</strain>
    </source>
</reference>
<reference key="2">
    <citation type="journal article" date="2022" name="Plant Mol. Biol.">
        <title>Arginine inhibition of the argininosuccinate lyases is conserved among three orders in cyanobacteria.</title>
        <authorList>
            <person name="Katayama N."/>
            <person name="Osanai T."/>
        </authorList>
    </citation>
    <scope>FUNCTION</scope>
    <scope>CATALYTIC ACTIVITY</scope>
    <scope>ACTIVITY REGULATION</scope>
    <scope>BIOPHYSICOCHEMICAL PROPERTIES</scope>
    <source>
        <strain>PCC 7120 / SAG 25.82 / UTEX 2576</strain>
    </source>
</reference>
<proteinExistence type="evidence at protein level"/>
<sequence length="461" mass="51726">MTEKQTWSQRFESALHPAIALFNASISFDIELIEYDLTGSQAHAQMLAHTGIISPAEGEQLVAGLEQIREEYRQGKFQPGIDAEDVHFAVERRLTEIVGDVGKKLHTARSRNDQVGTDTRLYLRDQILQIKTQLREFQRVLLDIAEKNVETLIPGYTHLQRAQPVSLAHHLLAYFQMAQRDWERLGDVYRRVNISPLGCGALAGTTFPIDRHYTAELLQFERIYENSLDGVSDRDFAIEFLCAASLIMVHLSRLSEEIILWASEEFRFVILKDSCATGSSIMPQKKNPDVPELVRGKTGRVFGHLQAMLVIMKGLPLAYNKDLQEDKEGLFDSVNTVKACLEAMTILLQEGLEFRTQRLAEAVTQDFSNATDVADYLAARGVPFREAYNIVGKVVKTSIAAGKLLKDLTLEEWQQIHPKFADDIYEAISPRQVVAARNSYGGTGFAQVSKAVSAARKEIGE</sequence>
<gene>
    <name evidence="1 3" type="primary">argH</name>
    <name type="ordered locus">alr3887</name>
</gene>
<accession>Q8YQE6</accession>
<protein>
    <recommendedName>
        <fullName evidence="1 3">Argininosuccinate lyase</fullName>
        <shortName evidence="1">ASAL</shortName>
        <ecNumber evidence="1 2">4.3.2.1</ecNumber>
    </recommendedName>
    <alternativeName>
        <fullName evidence="1">Arginosuccinase</fullName>
    </alternativeName>
    <alternativeName>
        <fullName evidence="3">NoArgH</fullName>
    </alternativeName>
</protein>
<comment type="function">
    <text evidence="2">Catalyzes the last step of arginine biosynthesis, the conversion of argininosuccinate into L-arginine and fumarate.</text>
</comment>
<comment type="catalytic activity">
    <reaction evidence="1 2">
        <text>2-(N(omega)-L-arginino)succinate = fumarate + L-arginine</text>
        <dbReference type="Rhea" id="RHEA:24020"/>
        <dbReference type="ChEBI" id="CHEBI:29806"/>
        <dbReference type="ChEBI" id="CHEBI:32682"/>
        <dbReference type="ChEBI" id="CHEBI:57472"/>
        <dbReference type="EC" id="4.3.2.1"/>
    </reaction>
    <physiologicalReaction direction="left-to-right" evidence="2">
        <dbReference type="Rhea" id="RHEA:24021"/>
    </physiologicalReaction>
</comment>
<comment type="activity regulation">
    <text evidence="2">Strongly inhibited by L-arginine (PubMed:35583703). Inhibitory effects are lowered at pH 7.0 compared to those at pH 8.0 (PubMed:35583703). At 42 degrees Celsius and pH 8.0, activity decreases to 77% and 25% in the presence of 1 mM and 10 mM arginine, respectively (PubMed:35583703). The other amino and organic acids do not affect activity (PubMed:35583703).</text>
</comment>
<comment type="biophysicochemical properties">
    <kinetics>
        <KM evidence="2">0.088 mM for argininosuccinate (at 42 degrees Celsius and pH 8.0)</KM>
        <text evidence="2">kcat is 8.71 sec(-1) with argininosuccinate as substrate.</text>
    </kinetics>
    <phDependence>
        <text evidence="2">Optimum pH is 8.0 (PubMed:35583703). Shows more than 35% enzymatic activity in terms of relative activity at pH 7.0-9.5 (PubMed:35583703).</text>
    </phDependence>
    <temperatureDependence>
        <text evidence="2">Optimum temperature is 42 degrees Celsius (PubMed:35583703). Shows more than 35% enzymatic activity in terms of relative activity at 25-50 degrees Celsius (PubMed:35583703). Inactive above 55 degrees Celsius (PubMed:35583703).</text>
    </temperatureDependence>
</comment>
<comment type="pathway">
    <text evidence="1">Amino-acid biosynthesis; L-arginine biosynthesis; L-arginine from L-ornithine and carbamoyl phosphate: step 3/3.</text>
</comment>
<comment type="subcellular location">
    <subcellularLocation>
        <location evidence="1">Cytoplasm</location>
    </subcellularLocation>
</comment>
<comment type="similarity">
    <text evidence="1">Belongs to the lyase 1 family. Argininosuccinate lyase subfamily.</text>
</comment>
<keyword id="KW-0028">Amino-acid biosynthesis</keyword>
<keyword id="KW-0055">Arginine biosynthesis</keyword>
<keyword id="KW-0963">Cytoplasm</keyword>
<keyword id="KW-0456">Lyase</keyword>
<keyword id="KW-1185">Reference proteome</keyword>